<evidence type="ECO:0000250" key="1"/>
<evidence type="ECO:0000255" key="2"/>
<evidence type="ECO:0000305" key="3"/>
<comment type="function">
    <text evidence="3">Ion channel inhibitor.</text>
</comment>
<comment type="subcellular location">
    <subcellularLocation>
        <location evidence="1">Secreted</location>
    </subcellularLocation>
</comment>
<comment type="tissue specificity">
    <text>Expressed by the venom gland.</text>
</comment>
<comment type="domain">
    <text evidence="1">The presence of a 'disulfide through disulfide knot' structurally defines this protein as a knottin.</text>
</comment>
<comment type="similarity">
    <text>Belongs to the neurotoxin 25 family. ICK-8 subfamily.</text>
</comment>
<proteinExistence type="evidence at transcript level"/>
<keyword id="KW-1015">Disulfide bond</keyword>
<keyword id="KW-0872">Ion channel impairing toxin</keyword>
<keyword id="KW-0960">Knottin</keyword>
<keyword id="KW-0964">Secreted</keyword>
<keyword id="KW-0732">Signal</keyword>
<keyword id="KW-0800">Toxin</keyword>
<dbReference type="EMBL" id="GAQE01000014">
    <property type="protein sequence ID" value="JAB84540.1"/>
    <property type="molecule type" value="Transcribed_RNA"/>
</dbReference>
<dbReference type="SMR" id="W4VRV2"/>
<dbReference type="ArachnoServer" id="AS001721">
    <property type="toxin name" value="U1-barytoxin-Tl1a"/>
</dbReference>
<dbReference type="GO" id="GO:0005576">
    <property type="term" value="C:extracellular region"/>
    <property type="evidence" value="ECO:0007669"/>
    <property type="project" value="UniProtKB-SubCell"/>
</dbReference>
<dbReference type="GO" id="GO:0099106">
    <property type="term" value="F:ion channel regulator activity"/>
    <property type="evidence" value="ECO:0007669"/>
    <property type="project" value="UniProtKB-KW"/>
</dbReference>
<dbReference type="GO" id="GO:0090729">
    <property type="term" value="F:toxin activity"/>
    <property type="evidence" value="ECO:0007669"/>
    <property type="project" value="UniProtKB-KW"/>
</dbReference>
<protein>
    <recommendedName>
        <fullName>Toxin ICK-11</fullName>
    </recommendedName>
</protein>
<sequence length="119" mass="13078">MMKLYSLVIIATLAAAAFAATSEEISAAVGEIISQHQEDLERYAKVVERGEEPKKYIRCSKQLGESCYLNCECCGAAAVCEDYKYICKEKVSDNSVLNALGQAWNAVGNSISRYYCDAE</sequence>
<feature type="signal peptide" evidence="2">
    <location>
        <begin position="1"/>
        <end position="19"/>
    </location>
</feature>
<feature type="chain" id="PRO_0000429218" description="Toxin ICK-11">
    <location>
        <begin position="20"/>
        <end position="119"/>
    </location>
</feature>
<feature type="disulfide bond" evidence="1">
    <location>
        <begin position="59"/>
        <end position="74"/>
    </location>
</feature>
<feature type="disulfide bond" evidence="1">
    <location>
        <begin position="67"/>
        <end position="80"/>
    </location>
</feature>
<feature type="disulfide bond" evidence="1">
    <location>
        <begin position="71"/>
        <end position="116"/>
    </location>
</feature>
<feature type="disulfide bond" evidence="1">
    <location>
        <begin position="73"/>
        <end position="87"/>
    </location>
</feature>
<organism>
    <name type="scientific">Trittame loki</name>
    <name type="common">Brush-footed trapdoor spider</name>
    <dbReference type="NCBI Taxonomy" id="1295018"/>
    <lineage>
        <taxon>Eukaryota</taxon>
        <taxon>Metazoa</taxon>
        <taxon>Ecdysozoa</taxon>
        <taxon>Arthropoda</taxon>
        <taxon>Chelicerata</taxon>
        <taxon>Arachnida</taxon>
        <taxon>Araneae</taxon>
        <taxon>Mygalomorphae</taxon>
        <taxon>Barychelidae</taxon>
        <taxon>Trittame</taxon>
    </lineage>
</organism>
<reference key="1">
    <citation type="journal article" date="2013" name="Toxins">
        <title>A proteomics and transcriptomics investigation of the venom from the barychelid spider Trittame loki (brush-foot trapdoor).</title>
        <authorList>
            <person name="Undheim E.A."/>
            <person name="Sunagar K."/>
            <person name="Herzig V."/>
            <person name="Kely L."/>
            <person name="Low D.H."/>
            <person name="Jackson T.N."/>
            <person name="Jones A."/>
            <person name="Kurniawan N."/>
            <person name="King G.F."/>
            <person name="Ali S.A."/>
            <person name="Antunes A."/>
            <person name="Ruder T."/>
            <person name="Fry B.G."/>
        </authorList>
    </citation>
    <scope>NUCLEOTIDE SEQUENCE [MRNA]</scope>
    <source>
        <tissue>Venom gland</tissue>
    </source>
</reference>
<name>ICK11_TRILK</name>
<accession>W4VRV2</accession>